<evidence type="ECO:0000250" key="1">
    <source>
        <dbReference type="UniProtKB" id="P79073"/>
    </source>
</evidence>
<evidence type="ECO:0000255" key="2"/>
<evidence type="ECO:0000269" key="3">
    <source>
    </source>
</evidence>
<evidence type="ECO:0000303" key="4">
    <source>
    </source>
</evidence>
<evidence type="ECO:0000305" key="5"/>
<proteinExistence type="evidence at transcript level"/>
<comment type="function">
    <text evidence="3 5">Aerial growth, conidiation, and dispersal of filamentous fungi in the environment rely upon a capability of their secreting small amphipathic proteins called hydrophobins (HPBs) with low sequence identity. Class I can self-assemble into an outermost layer of rodlet bundles on aerial cell surfaces, conferring cellular hydrophobicity that supports fungal growth, development and dispersal; whereas Class II form highly ordered films at water-air interfaces through intermolecular interactions but contribute nothing to the rodlet structure (Probable). Hyd2 is a class II hydrophobin that plays probably a role in intraspecific signaling or hyphal fusion (PubMed:24483277). Not necessary for root adhesion and colonization (PubMed:24483277). Might play an essential role since no deletion mutants could be obtained (PubMed:24483277).</text>
</comment>
<comment type="subunit">
    <text evidence="1">Homodimer (By similarity). Homodimers further self-assemble to form highly ordered films at water-air interfaces through intermolecular interactions (By similarity).</text>
</comment>
<comment type="subcellular location">
    <subcellularLocation>
        <location evidence="1">Secreted</location>
    </subcellularLocation>
    <subcellularLocation>
        <location evidence="1">Secreted</location>
        <location evidence="1">Cell wall</location>
    </subcellularLocation>
</comment>
<comment type="induction">
    <text evidence="3">Expression is not affected by carbon nor nitrogen starvation (PubMed:24483277). Expression is neither affected by a deletion of Hyd1 or Hyd3 (PubMed:24483277). Expression is induced during Bionectria ochroleuca self interaction (PubMed:24483277).</text>
</comment>
<comment type="similarity">
    <text evidence="5">Belongs to the cerato-ulmin hydrophobin family.</text>
</comment>
<protein>
    <recommendedName>
        <fullName evidence="4">Class II hydrophobin 2</fullName>
    </recommendedName>
</protein>
<sequence>MRSFLVIATLAVGAFGQSYDPCPNDLKNHALCCNAGLENLINFDCHTRKFDSLLPPFQATCARTGSYPKCCTIKIISQGLLCEDPAGVENPDTDTFNPEGDNELENLLDDVGNILNEVLNLLN</sequence>
<feature type="signal peptide" evidence="2">
    <location>
        <begin position="1"/>
        <end position="16"/>
    </location>
</feature>
<feature type="chain" id="PRO_5004912583" description="Class II hydrophobin 2">
    <location>
        <begin position="17"/>
        <end position="123"/>
    </location>
</feature>
<feature type="disulfide bond" evidence="1">
    <location>
        <begin position="22"/>
        <end position="70"/>
    </location>
</feature>
<feature type="disulfide bond" evidence="1">
    <location>
        <begin position="32"/>
        <end position="61"/>
    </location>
</feature>
<feature type="disulfide bond" evidence="1">
    <location>
        <begin position="33"/>
        <end position="45"/>
    </location>
</feature>
<feature type="disulfide bond" evidence="1">
    <location>
        <begin position="71"/>
        <end position="82"/>
    </location>
</feature>
<keyword id="KW-0134">Cell wall</keyword>
<keyword id="KW-1015">Disulfide bond</keyword>
<keyword id="KW-0964">Secreted</keyword>
<keyword id="KW-0732">Signal</keyword>
<organism>
    <name type="scientific">Bionectria ochroleuca</name>
    <name type="common">Gliocladium roseum</name>
    <dbReference type="NCBI Taxonomy" id="29856"/>
    <lineage>
        <taxon>Eukaryota</taxon>
        <taxon>Fungi</taxon>
        <taxon>Dikarya</taxon>
        <taxon>Ascomycota</taxon>
        <taxon>Pezizomycotina</taxon>
        <taxon>Sordariomycetes</taxon>
        <taxon>Hypocreomycetidae</taxon>
        <taxon>Hypocreales</taxon>
        <taxon>Bionectriaceae</taxon>
        <taxon>Clonostachys</taxon>
    </lineage>
</organism>
<name>HYD2_BIOOC</name>
<reference key="1">
    <citation type="journal article" date="2014" name="BMC Microbiol.">
        <title>Hydrophobins are required for conidial hydrophobicity and plant root colonization in the fungal biocontrol agent Clonostachys rosea.</title>
        <authorList>
            <person name="Dubey M.K."/>
            <person name="Jensen D.F."/>
            <person name="Karlsson M."/>
        </authorList>
    </citation>
    <scope>NUCLEOTIDE SEQUENCE [GENOMIC DNA]</scope>
    <scope>INDUCTION</scope>
    <scope>FUNCTION</scope>
    <source>
        <strain>IK726</strain>
    </source>
</reference>
<dbReference type="EMBL" id="KF834268">
    <property type="protein sequence ID" value="AHL20219.1"/>
    <property type="molecule type" value="Genomic_DNA"/>
</dbReference>
<dbReference type="GO" id="GO:0005576">
    <property type="term" value="C:extracellular region"/>
    <property type="evidence" value="ECO:0007669"/>
    <property type="project" value="UniProtKB-KW"/>
</dbReference>
<dbReference type="CDD" id="cd23508">
    <property type="entry name" value="hydrophobin_II"/>
    <property type="match status" value="1"/>
</dbReference>
<dbReference type="Gene3D" id="3.20.120.10">
    <property type="entry name" value="Hydrophobin"/>
    <property type="match status" value="1"/>
</dbReference>
<dbReference type="InterPro" id="IPR010636">
    <property type="entry name" value="Cerato-ulmin_hydrophobin"/>
</dbReference>
<dbReference type="InterPro" id="IPR036686">
    <property type="entry name" value="Hydrophobin_sf"/>
</dbReference>
<dbReference type="Pfam" id="PF06766">
    <property type="entry name" value="Hydrophobin_2"/>
    <property type="match status" value="1"/>
</dbReference>
<dbReference type="SUPFAM" id="SSF101751">
    <property type="entry name" value="Hydrophobin II, HfbII"/>
    <property type="match status" value="1"/>
</dbReference>
<gene>
    <name evidence="4" type="primary">Hyd2</name>
</gene>
<accession>W8NXX4</accession>